<keyword id="KW-0004">4Fe-4S</keyword>
<keyword id="KW-0028">Amino-acid biosynthesis</keyword>
<keyword id="KW-0198">Cysteine biosynthesis</keyword>
<keyword id="KW-0349">Heme</keyword>
<keyword id="KW-0408">Iron</keyword>
<keyword id="KW-0411">Iron-sulfur</keyword>
<keyword id="KW-0479">Metal-binding</keyword>
<keyword id="KW-0521">NADP</keyword>
<keyword id="KW-0560">Oxidoreductase</keyword>
<name>CYSI_YERP3</name>
<organism>
    <name type="scientific">Yersinia pseudotuberculosis serotype O:1b (strain IP 31758)</name>
    <dbReference type="NCBI Taxonomy" id="349747"/>
    <lineage>
        <taxon>Bacteria</taxon>
        <taxon>Pseudomonadati</taxon>
        <taxon>Pseudomonadota</taxon>
        <taxon>Gammaproteobacteria</taxon>
        <taxon>Enterobacterales</taxon>
        <taxon>Yersiniaceae</taxon>
        <taxon>Yersinia</taxon>
    </lineage>
</organism>
<protein>
    <recommendedName>
        <fullName evidence="1">Sulfite reductase [NADPH] hemoprotein beta-component</fullName>
        <shortName evidence="1">SiR-HP</shortName>
        <shortName evidence="1">SiRHP</shortName>
        <ecNumber evidence="1">1.8.1.2</ecNumber>
    </recommendedName>
</protein>
<proteinExistence type="inferred from homology"/>
<sequence>MNEKHPGPLVVSGKLSDGERMKSESNFLRGTIAEDLNNGLTGGFSGDNFLLIRFHGMYQQDDRDIRAERAEQKLEPRHAMMLRCRLPGGIITPQQWLGIDKFAADNTLYGSIRITNRQTFQFHGILKGNVKPAHQLLNELGLDALATANDVNRNVLCTSNPVESALHQEAYEWAKKISEHLLPRTRAYAEIWLDAEKVATTDEEPILGATYLPRKFKTTVVIPPQNDVDLHANDLNFVAVADKGKLIGFNVLVGGGLSIAHGDKNTYPRKASEFGYIPLKHTLAIAEAVVTTQRDWGNRTDRKNAKTKYTLERVGVETFKAEVEKRAGVSFSAIKPYQFTGRGDRIGWVKGVDKKWHLTLFIENGRLLDYPGRSLKTGVAEIAKIHQGDFRLTANQNLIVAGVPEKDKARIEALAREHGLMDDNVTSQRENSMACVSFPTCPLAMAEAERFLPEFVTRVEGILQQHGLADEHIVLRVTGCPNGCGRALLAEVGLVGKAVGRYNLHLGGNREGTRIPRMYRENITADEILLITDQLVGRWAKERHVDEGFGDFVIRAGVIAPVIDSARDFYDVQEAM</sequence>
<accession>A7FLY9</accession>
<reference key="1">
    <citation type="journal article" date="2007" name="PLoS Genet.">
        <title>The complete genome sequence of Yersinia pseudotuberculosis IP31758, the causative agent of Far East scarlet-like fever.</title>
        <authorList>
            <person name="Eppinger M."/>
            <person name="Rosovitz M.J."/>
            <person name="Fricke W.F."/>
            <person name="Rasko D.A."/>
            <person name="Kokorina G."/>
            <person name="Fayolle C."/>
            <person name="Lindler L.E."/>
            <person name="Carniel E."/>
            <person name="Ravel J."/>
        </authorList>
    </citation>
    <scope>NUCLEOTIDE SEQUENCE [LARGE SCALE GENOMIC DNA]</scope>
    <source>
        <strain>IP 31758</strain>
    </source>
</reference>
<evidence type="ECO:0000255" key="1">
    <source>
        <dbReference type="HAMAP-Rule" id="MF_01540"/>
    </source>
</evidence>
<dbReference type="EC" id="1.8.1.2" evidence="1"/>
<dbReference type="EMBL" id="CP000720">
    <property type="protein sequence ID" value="ABS46664.1"/>
    <property type="molecule type" value="Genomic_DNA"/>
</dbReference>
<dbReference type="RefSeq" id="WP_012105646.1">
    <property type="nucleotide sequence ID" value="NC_009708.1"/>
</dbReference>
<dbReference type="SMR" id="A7FLY9"/>
<dbReference type="KEGG" id="ypi:YpsIP31758_3310"/>
<dbReference type="HOGENOM" id="CLU_001975_3_2_6"/>
<dbReference type="UniPathway" id="UPA00140">
    <property type="reaction ID" value="UER00207"/>
</dbReference>
<dbReference type="Proteomes" id="UP000002412">
    <property type="component" value="Chromosome"/>
</dbReference>
<dbReference type="GO" id="GO:0009337">
    <property type="term" value="C:sulfite reductase complex (NADPH)"/>
    <property type="evidence" value="ECO:0007669"/>
    <property type="project" value="InterPro"/>
</dbReference>
<dbReference type="GO" id="GO:0051539">
    <property type="term" value="F:4 iron, 4 sulfur cluster binding"/>
    <property type="evidence" value="ECO:0007669"/>
    <property type="project" value="UniProtKB-KW"/>
</dbReference>
<dbReference type="GO" id="GO:0020037">
    <property type="term" value="F:heme binding"/>
    <property type="evidence" value="ECO:0007669"/>
    <property type="project" value="InterPro"/>
</dbReference>
<dbReference type="GO" id="GO:0046872">
    <property type="term" value="F:metal ion binding"/>
    <property type="evidence" value="ECO:0007669"/>
    <property type="project" value="UniProtKB-KW"/>
</dbReference>
<dbReference type="GO" id="GO:0050661">
    <property type="term" value="F:NADP binding"/>
    <property type="evidence" value="ECO:0007669"/>
    <property type="project" value="InterPro"/>
</dbReference>
<dbReference type="GO" id="GO:0050311">
    <property type="term" value="F:sulfite reductase (ferredoxin) activity"/>
    <property type="evidence" value="ECO:0007669"/>
    <property type="project" value="TreeGrafter"/>
</dbReference>
<dbReference type="GO" id="GO:0004783">
    <property type="term" value="F:sulfite reductase (NADPH) activity"/>
    <property type="evidence" value="ECO:0007669"/>
    <property type="project" value="UniProtKB-UniRule"/>
</dbReference>
<dbReference type="GO" id="GO:0019344">
    <property type="term" value="P:cysteine biosynthetic process"/>
    <property type="evidence" value="ECO:0007669"/>
    <property type="project" value="UniProtKB-KW"/>
</dbReference>
<dbReference type="GO" id="GO:0070814">
    <property type="term" value="P:hydrogen sulfide biosynthetic process"/>
    <property type="evidence" value="ECO:0007669"/>
    <property type="project" value="UniProtKB-UniRule"/>
</dbReference>
<dbReference type="GO" id="GO:0000103">
    <property type="term" value="P:sulfate assimilation"/>
    <property type="evidence" value="ECO:0007669"/>
    <property type="project" value="UniProtKB-UniRule"/>
</dbReference>
<dbReference type="FunFam" id="3.30.413.10:FF:000003">
    <property type="entry name" value="Sulfite reductase [NADPH] hemoprotein beta-component"/>
    <property type="match status" value="1"/>
</dbReference>
<dbReference type="FunFam" id="3.30.413.10:FF:000004">
    <property type="entry name" value="Sulfite reductase [NADPH] hemoprotein beta-component"/>
    <property type="match status" value="1"/>
</dbReference>
<dbReference type="Gene3D" id="3.30.413.10">
    <property type="entry name" value="Sulfite Reductase Hemoprotein, domain 1"/>
    <property type="match status" value="2"/>
</dbReference>
<dbReference type="HAMAP" id="MF_01540">
    <property type="entry name" value="CysI"/>
    <property type="match status" value="1"/>
</dbReference>
<dbReference type="InterPro" id="IPR011786">
    <property type="entry name" value="CysI"/>
</dbReference>
<dbReference type="InterPro" id="IPR005117">
    <property type="entry name" value="NiRdtase/SiRdtase_haem-b_fer"/>
</dbReference>
<dbReference type="InterPro" id="IPR036136">
    <property type="entry name" value="Nit/Sulf_reduc_fer-like_dom_sf"/>
</dbReference>
<dbReference type="InterPro" id="IPR006067">
    <property type="entry name" value="NO2/SO3_Rdtase_4Fe4S_dom"/>
</dbReference>
<dbReference type="InterPro" id="IPR045169">
    <property type="entry name" value="NO2/SO3_Rdtase_4Fe4S_prot"/>
</dbReference>
<dbReference type="InterPro" id="IPR045854">
    <property type="entry name" value="NO2/SO3_Rdtase_4Fe4S_sf"/>
</dbReference>
<dbReference type="InterPro" id="IPR006066">
    <property type="entry name" value="NO2/SO3_Rdtase_FeS/sirohaem_BS"/>
</dbReference>
<dbReference type="NCBIfam" id="TIGR02041">
    <property type="entry name" value="CysI"/>
    <property type="match status" value="1"/>
</dbReference>
<dbReference type="NCBIfam" id="NF010029">
    <property type="entry name" value="PRK13504.1"/>
    <property type="match status" value="1"/>
</dbReference>
<dbReference type="PANTHER" id="PTHR11493:SF47">
    <property type="entry name" value="SULFITE REDUCTASE [NADPH] SUBUNIT BETA"/>
    <property type="match status" value="1"/>
</dbReference>
<dbReference type="PANTHER" id="PTHR11493">
    <property type="entry name" value="SULFITE REDUCTASE [NADPH] SUBUNIT BETA-RELATED"/>
    <property type="match status" value="1"/>
</dbReference>
<dbReference type="Pfam" id="PF01077">
    <property type="entry name" value="NIR_SIR"/>
    <property type="match status" value="1"/>
</dbReference>
<dbReference type="Pfam" id="PF03460">
    <property type="entry name" value="NIR_SIR_ferr"/>
    <property type="match status" value="2"/>
</dbReference>
<dbReference type="PRINTS" id="PR00397">
    <property type="entry name" value="SIROHAEM"/>
</dbReference>
<dbReference type="SUPFAM" id="SSF56014">
    <property type="entry name" value="Nitrite and sulphite reductase 4Fe-4S domain-like"/>
    <property type="match status" value="2"/>
</dbReference>
<dbReference type="SUPFAM" id="SSF55124">
    <property type="entry name" value="Nitrite/Sulfite reductase N-terminal domain-like"/>
    <property type="match status" value="2"/>
</dbReference>
<dbReference type="PROSITE" id="PS00365">
    <property type="entry name" value="NIR_SIR"/>
    <property type="match status" value="1"/>
</dbReference>
<comment type="function">
    <text evidence="1">Component of the sulfite reductase complex that catalyzes the 6-electron reduction of sulfite to sulfide. This is one of several activities required for the biosynthesis of L-cysteine from sulfate.</text>
</comment>
<comment type="catalytic activity">
    <reaction evidence="1">
        <text>hydrogen sulfide + 3 NADP(+) + 3 H2O = sulfite + 3 NADPH + 4 H(+)</text>
        <dbReference type="Rhea" id="RHEA:13801"/>
        <dbReference type="ChEBI" id="CHEBI:15377"/>
        <dbReference type="ChEBI" id="CHEBI:15378"/>
        <dbReference type="ChEBI" id="CHEBI:17359"/>
        <dbReference type="ChEBI" id="CHEBI:29919"/>
        <dbReference type="ChEBI" id="CHEBI:57783"/>
        <dbReference type="ChEBI" id="CHEBI:58349"/>
        <dbReference type="EC" id="1.8.1.2"/>
    </reaction>
</comment>
<comment type="cofactor">
    <cofactor evidence="1">
        <name>siroheme</name>
        <dbReference type="ChEBI" id="CHEBI:60052"/>
    </cofactor>
    <text evidence="1">Binds 1 siroheme per subunit.</text>
</comment>
<comment type="cofactor">
    <cofactor evidence="1">
        <name>[4Fe-4S] cluster</name>
        <dbReference type="ChEBI" id="CHEBI:49883"/>
    </cofactor>
    <text evidence="1">Binds 1 [4Fe-4S] cluster per subunit.</text>
</comment>
<comment type="pathway">
    <text evidence="1">Sulfur metabolism; hydrogen sulfide biosynthesis; hydrogen sulfide from sulfite (NADPH route): step 1/1.</text>
</comment>
<comment type="subunit">
    <text evidence="1">Alpha(8)-beta(8). The alpha component is a flavoprotein, the beta component is a hemoprotein.</text>
</comment>
<comment type="similarity">
    <text evidence="1">Belongs to the nitrite and sulfite reductase 4Fe-4S domain family.</text>
</comment>
<gene>
    <name evidence="1" type="primary">cysI</name>
    <name type="ordered locus">YpsIP31758_3310</name>
</gene>
<feature type="chain" id="PRO_1000068781" description="Sulfite reductase [NADPH] hemoprotein beta-component">
    <location>
        <begin position="1"/>
        <end position="576"/>
    </location>
</feature>
<feature type="binding site" evidence="1">
    <location>
        <position position="435"/>
    </location>
    <ligand>
        <name>[4Fe-4S] cluster</name>
        <dbReference type="ChEBI" id="CHEBI:49883"/>
    </ligand>
</feature>
<feature type="binding site" evidence="1">
    <location>
        <position position="441"/>
    </location>
    <ligand>
        <name>[4Fe-4S] cluster</name>
        <dbReference type="ChEBI" id="CHEBI:49883"/>
    </ligand>
</feature>
<feature type="binding site" evidence="1">
    <location>
        <position position="480"/>
    </location>
    <ligand>
        <name>[4Fe-4S] cluster</name>
        <dbReference type="ChEBI" id="CHEBI:49883"/>
    </ligand>
</feature>
<feature type="binding site" evidence="1">
    <location>
        <position position="484"/>
    </location>
    <ligand>
        <name>[4Fe-4S] cluster</name>
        <dbReference type="ChEBI" id="CHEBI:49883"/>
    </ligand>
</feature>
<feature type="binding site" description="axial binding residue" evidence="1">
    <location>
        <position position="484"/>
    </location>
    <ligand>
        <name>siroheme</name>
        <dbReference type="ChEBI" id="CHEBI:60052"/>
    </ligand>
    <ligandPart>
        <name>Fe</name>
        <dbReference type="ChEBI" id="CHEBI:18248"/>
    </ligandPart>
</feature>